<accession>A0R2I7</accession>
<accession>I7FJE2</accession>
<dbReference type="EC" id="3.5.1.103"/>
<dbReference type="EMBL" id="CP000480">
    <property type="protein sequence ID" value="ABK71645.1"/>
    <property type="molecule type" value="Genomic_DNA"/>
</dbReference>
<dbReference type="EMBL" id="CP001663">
    <property type="protein sequence ID" value="AFP41445.1"/>
    <property type="molecule type" value="Genomic_DNA"/>
</dbReference>
<dbReference type="RefSeq" id="WP_011730335.1">
    <property type="nucleotide sequence ID" value="NZ_SIJM01000038.1"/>
</dbReference>
<dbReference type="RefSeq" id="YP_889375.1">
    <property type="nucleotide sequence ID" value="NC_008596.1"/>
</dbReference>
<dbReference type="SMR" id="A0R2I7"/>
<dbReference type="STRING" id="246196.MSMEG_5129"/>
<dbReference type="PaxDb" id="246196-MSMEI_5001"/>
<dbReference type="KEGG" id="msb:LJ00_25370"/>
<dbReference type="KEGG" id="msg:MSMEI_5001"/>
<dbReference type="KEGG" id="msm:MSMEG_5129"/>
<dbReference type="PATRIC" id="fig|246196.19.peg.5005"/>
<dbReference type="eggNOG" id="COG2120">
    <property type="taxonomic scope" value="Bacteria"/>
</dbReference>
<dbReference type="OrthoDB" id="158614at2"/>
<dbReference type="BRENDA" id="3.5.1.103">
    <property type="organism ID" value="3512"/>
</dbReference>
<dbReference type="Proteomes" id="UP000000757">
    <property type="component" value="Chromosome"/>
</dbReference>
<dbReference type="Proteomes" id="UP000006158">
    <property type="component" value="Chromosome"/>
</dbReference>
<dbReference type="GO" id="GO:0035595">
    <property type="term" value="F:N-acetylglucosaminylinositol deacetylase activity"/>
    <property type="evidence" value="ECO:0007669"/>
    <property type="project" value="UniProtKB-EC"/>
</dbReference>
<dbReference type="GO" id="GO:0008270">
    <property type="term" value="F:zinc ion binding"/>
    <property type="evidence" value="ECO:0007669"/>
    <property type="project" value="UniProtKB-UniRule"/>
</dbReference>
<dbReference type="GO" id="GO:0010125">
    <property type="term" value="P:mycothiol biosynthetic process"/>
    <property type="evidence" value="ECO:0007669"/>
    <property type="project" value="UniProtKB-UniRule"/>
</dbReference>
<dbReference type="Gene3D" id="3.40.50.10320">
    <property type="entry name" value="LmbE-like"/>
    <property type="match status" value="1"/>
</dbReference>
<dbReference type="HAMAP" id="MF_01696">
    <property type="entry name" value="MshB"/>
    <property type="match status" value="1"/>
</dbReference>
<dbReference type="InterPro" id="IPR003737">
    <property type="entry name" value="GlcNAc_PI_deacetylase-related"/>
</dbReference>
<dbReference type="InterPro" id="IPR024078">
    <property type="entry name" value="LmbE-like_dom_sf"/>
</dbReference>
<dbReference type="InterPro" id="IPR017810">
    <property type="entry name" value="Mycothiol_biosynthesis_MshB"/>
</dbReference>
<dbReference type="NCBIfam" id="TIGR03445">
    <property type="entry name" value="mycothiol_MshB"/>
    <property type="match status" value="1"/>
</dbReference>
<dbReference type="PANTHER" id="PTHR12993:SF26">
    <property type="entry name" value="1D-MYO-INOSITOL 2-ACETAMIDO-2-DEOXY-ALPHA-D-GLUCOPYRANOSIDE DEACETYLASE"/>
    <property type="match status" value="1"/>
</dbReference>
<dbReference type="PANTHER" id="PTHR12993">
    <property type="entry name" value="N-ACETYLGLUCOSAMINYL-PHOSPHATIDYLINOSITOL DE-N-ACETYLASE-RELATED"/>
    <property type="match status" value="1"/>
</dbReference>
<dbReference type="Pfam" id="PF02585">
    <property type="entry name" value="PIG-L"/>
    <property type="match status" value="1"/>
</dbReference>
<dbReference type="SUPFAM" id="SSF102588">
    <property type="entry name" value="LmbE-like"/>
    <property type="match status" value="1"/>
</dbReference>
<keyword id="KW-0378">Hydrolase</keyword>
<keyword id="KW-0479">Metal-binding</keyword>
<keyword id="KW-1185">Reference proteome</keyword>
<keyword id="KW-0862">Zinc</keyword>
<name>MSHB_MYCS2</name>
<comment type="function">
    <text evidence="2">Catalyzes the deacetylation of 1D-myo-inositol 2-acetamido-2-deoxy-alpha-D-glucopyranoside (GlcNAc-Ins) in the mycothiol biosynthesis pathway.</text>
</comment>
<comment type="catalytic activity">
    <reaction>
        <text>1D-myo-inositol 2-acetamido-2-deoxy-alpha-D-glucopyranoside + H2O = 1D-myo-inositol 2-amino-2-deoxy-alpha-D-glucopyranoside + acetate</text>
        <dbReference type="Rhea" id="RHEA:26180"/>
        <dbReference type="ChEBI" id="CHEBI:15377"/>
        <dbReference type="ChEBI" id="CHEBI:30089"/>
        <dbReference type="ChEBI" id="CHEBI:52442"/>
        <dbReference type="ChEBI" id="CHEBI:58886"/>
        <dbReference type="EC" id="3.5.1.103"/>
    </reaction>
</comment>
<comment type="cofactor">
    <cofactor evidence="1">
        <name>Zn(2+)</name>
        <dbReference type="ChEBI" id="CHEBI:29105"/>
    </cofactor>
    <text evidence="1">Binds 1 zinc ion per subunit.</text>
</comment>
<comment type="similarity">
    <text evidence="3">Belongs to the MshB deacetylase family.</text>
</comment>
<organism>
    <name type="scientific">Mycolicibacterium smegmatis (strain ATCC 700084 / mc(2)155)</name>
    <name type="common">Mycobacterium smegmatis</name>
    <dbReference type="NCBI Taxonomy" id="246196"/>
    <lineage>
        <taxon>Bacteria</taxon>
        <taxon>Bacillati</taxon>
        <taxon>Actinomycetota</taxon>
        <taxon>Actinomycetes</taxon>
        <taxon>Mycobacteriales</taxon>
        <taxon>Mycobacteriaceae</taxon>
        <taxon>Mycolicibacterium</taxon>
    </lineage>
</organism>
<evidence type="ECO:0000250" key="1"/>
<evidence type="ECO:0000269" key="2">
    <source>
    </source>
</evidence>
<evidence type="ECO:0000305" key="3"/>
<protein>
    <recommendedName>
        <fullName>1D-myo-inositol 2-acetamido-2-deoxy-alpha-D-glucopyranoside deacetylase</fullName>
        <shortName>GlcNAc-Ins deacetylase</shortName>
        <ecNumber>3.5.1.103</ecNumber>
    </recommendedName>
    <alternativeName>
        <fullName>N-acetyl-1-D-myo-inositol 2-amino-2-deoxy-alpha-D-glucopyranoside deacetylase</fullName>
    </alternativeName>
</protein>
<feature type="chain" id="PRO_0000399825" description="1D-myo-inositol 2-acetamido-2-deoxy-alpha-D-glucopyranoside deacetylase">
    <location>
        <begin position="1"/>
        <end position="290"/>
    </location>
</feature>
<feature type="binding site" evidence="1">
    <location>
        <position position="15"/>
    </location>
    <ligand>
        <name>Zn(2+)</name>
        <dbReference type="ChEBI" id="CHEBI:29105"/>
    </ligand>
</feature>
<feature type="binding site" evidence="1">
    <location>
        <position position="18"/>
    </location>
    <ligand>
        <name>Zn(2+)</name>
        <dbReference type="ChEBI" id="CHEBI:29105"/>
    </ligand>
</feature>
<feature type="binding site" evidence="1">
    <location>
        <position position="149"/>
    </location>
    <ligand>
        <name>Zn(2+)</name>
        <dbReference type="ChEBI" id="CHEBI:29105"/>
    </ligand>
</feature>
<sequence length="290" mass="30819">MSSHESPRLLFVHAHPDDETLTTGGTIAHYVARSAEVHVVTCTLGEEGEVIGERYAQLAVDHADQLGGYRIAELTAALQSLGLRGPRYLGGAGHWRDSGMAGTPSRGRQRWVDADLDEAVGALVAVIGEVRPHVVVTYDPNGGYGHPDHIQTHVVTTRAVAAAPEAVGWTVPKFYWTVTAISAMTAGLQALGDVPSEWIRVNAEDIPFGFGDDQIDAVVDVTAELPAKVGAMRAHATQITVAPDGRAFALSNNIALPVLGEEHYVLVSGEAGPRDSRGWETDLLAGLDLE</sequence>
<proteinExistence type="inferred from homology"/>
<reference key="1">
    <citation type="submission" date="2006-10" db="EMBL/GenBank/DDBJ databases">
        <authorList>
            <person name="Fleischmann R.D."/>
            <person name="Dodson R.J."/>
            <person name="Haft D.H."/>
            <person name="Merkel J.S."/>
            <person name="Nelson W.C."/>
            <person name="Fraser C.M."/>
        </authorList>
    </citation>
    <scope>NUCLEOTIDE SEQUENCE [LARGE SCALE GENOMIC DNA]</scope>
    <source>
        <strain>ATCC 700084 / mc(2)155</strain>
    </source>
</reference>
<reference key="2">
    <citation type="journal article" date="2007" name="Genome Biol.">
        <title>Interrupted coding sequences in Mycobacterium smegmatis: authentic mutations or sequencing errors?</title>
        <authorList>
            <person name="Deshayes C."/>
            <person name="Perrodou E."/>
            <person name="Gallien S."/>
            <person name="Euphrasie D."/>
            <person name="Schaeffer C."/>
            <person name="Van-Dorsselaer A."/>
            <person name="Poch O."/>
            <person name="Lecompte O."/>
            <person name="Reyrat J.-M."/>
        </authorList>
    </citation>
    <scope>NUCLEOTIDE SEQUENCE [LARGE SCALE GENOMIC DNA]</scope>
    <source>
        <strain>ATCC 700084 / mc(2)155</strain>
    </source>
</reference>
<reference key="3">
    <citation type="journal article" date="2009" name="Genome Res.">
        <title>Ortho-proteogenomics: multiple proteomes investigation through orthology and a new MS-based protocol.</title>
        <authorList>
            <person name="Gallien S."/>
            <person name="Perrodou E."/>
            <person name="Carapito C."/>
            <person name="Deshayes C."/>
            <person name="Reyrat J.-M."/>
            <person name="Van Dorsselaer A."/>
            <person name="Poch O."/>
            <person name="Schaeffer C."/>
            <person name="Lecompte O."/>
        </authorList>
    </citation>
    <scope>NUCLEOTIDE SEQUENCE [LARGE SCALE GENOMIC DNA]</scope>
    <source>
        <strain>ATCC 700084 / mc(2)155</strain>
    </source>
</reference>
<reference key="4">
    <citation type="journal article" date="2000" name="J. Bacteriol.">
        <title>N-Acetyl-1-D-myo-inosityl-2-amino-2-deoxy-alpha-D-glucopyranoside deacetylase (MshB) is a key enzyme in mycothiol biosynthesis.</title>
        <authorList>
            <person name="Newton G.L."/>
            <person name="Av-Gay Y."/>
            <person name="Fahey R.C."/>
        </authorList>
    </citation>
    <scope>FUNCTION</scope>
</reference>
<gene>
    <name type="primary">mshB</name>
    <name type="ordered locus">MSMEG_5129</name>
    <name type="ordered locus">MSMEI_5001</name>
</gene>